<protein>
    <recommendedName>
        <fullName evidence="1">Probable 5-dehydro-4-deoxyglucarate dehydratase</fullName>
        <ecNumber evidence="1">4.2.1.41</ecNumber>
    </recommendedName>
    <alternativeName>
        <fullName evidence="1">5-keto-4-deoxy-glucarate dehydratase</fullName>
        <shortName evidence="1">KDGDH</shortName>
    </alternativeName>
</protein>
<organism>
    <name type="scientific">Chelativorans sp. (strain BNC1)</name>
    <dbReference type="NCBI Taxonomy" id="266779"/>
    <lineage>
        <taxon>Bacteria</taxon>
        <taxon>Pseudomonadati</taxon>
        <taxon>Pseudomonadota</taxon>
        <taxon>Alphaproteobacteria</taxon>
        <taxon>Hyphomicrobiales</taxon>
        <taxon>Phyllobacteriaceae</taxon>
        <taxon>Chelativorans</taxon>
    </lineage>
</organism>
<dbReference type="EC" id="4.2.1.41" evidence="1"/>
<dbReference type="EMBL" id="CP000390">
    <property type="protein sequence ID" value="ABG63340.1"/>
    <property type="molecule type" value="Genomic_DNA"/>
</dbReference>
<dbReference type="SMR" id="Q11GY5"/>
<dbReference type="STRING" id="266779.Meso_1947"/>
<dbReference type="KEGG" id="mes:Meso_1947"/>
<dbReference type="eggNOG" id="COG0329">
    <property type="taxonomic scope" value="Bacteria"/>
</dbReference>
<dbReference type="HOGENOM" id="CLU_049343_5_2_5"/>
<dbReference type="OrthoDB" id="8995637at2"/>
<dbReference type="UniPathway" id="UPA00564">
    <property type="reaction ID" value="UER00628"/>
</dbReference>
<dbReference type="GO" id="GO:0008840">
    <property type="term" value="F:4-hydroxy-tetrahydrodipicolinate synthase activity"/>
    <property type="evidence" value="ECO:0007669"/>
    <property type="project" value="TreeGrafter"/>
</dbReference>
<dbReference type="GO" id="GO:0047448">
    <property type="term" value="F:5-dehydro-4-deoxyglucarate dehydratase activity"/>
    <property type="evidence" value="ECO:0007669"/>
    <property type="project" value="UniProtKB-UniRule"/>
</dbReference>
<dbReference type="GO" id="GO:0042838">
    <property type="term" value="P:D-glucarate catabolic process"/>
    <property type="evidence" value="ECO:0007669"/>
    <property type="project" value="UniProtKB-UniRule"/>
</dbReference>
<dbReference type="CDD" id="cd00951">
    <property type="entry name" value="KDGDH"/>
    <property type="match status" value="1"/>
</dbReference>
<dbReference type="Gene3D" id="3.20.20.70">
    <property type="entry name" value="Aldolase class I"/>
    <property type="match status" value="1"/>
</dbReference>
<dbReference type="HAMAP" id="MF_00694">
    <property type="entry name" value="KDGDH"/>
    <property type="match status" value="1"/>
</dbReference>
<dbReference type="InterPro" id="IPR013785">
    <property type="entry name" value="Aldolase_TIM"/>
</dbReference>
<dbReference type="InterPro" id="IPR002220">
    <property type="entry name" value="DapA-like"/>
</dbReference>
<dbReference type="InterPro" id="IPR017655">
    <property type="entry name" value="Dehydro-deoxyglucarate_dehyd"/>
</dbReference>
<dbReference type="NCBIfam" id="TIGR03249">
    <property type="entry name" value="KdgD"/>
    <property type="match status" value="1"/>
</dbReference>
<dbReference type="NCBIfam" id="NF002958">
    <property type="entry name" value="PRK03620.1"/>
    <property type="match status" value="1"/>
</dbReference>
<dbReference type="PANTHER" id="PTHR12128:SF19">
    <property type="entry name" value="5-DEHYDRO-4-DEOXYGLUCARATE DEHYDRATASE 2-RELATED"/>
    <property type="match status" value="1"/>
</dbReference>
<dbReference type="PANTHER" id="PTHR12128">
    <property type="entry name" value="DIHYDRODIPICOLINATE SYNTHASE"/>
    <property type="match status" value="1"/>
</dbReference>
<dbReference type="Pfam" id="PF00701">
    <property type="entry name" value="DHDPS"/>
    <property type="match status" value="1"/>
</dbReference>
<dbReference type="PIRSF" id="PIRSF001365">
    <property type="entry name" value="DHDPS"/>
    <property type="match status" value="1"/>
</dbReference>
<dbReference type="SMART" id="SM01130">
    <property type="entry name" value="DHDPS"/>
    <property type="match status" value="1"/>
</dbReference>
<dbReference type="SUPFAM" id="SSF51569">
    <property type="entry name" value="Aldolase"/>
    <property type="match status" value="1"/>
</dbReference>
<evidence type="ECO:0000255" key="1">
    <source>
        <dbReference type="HAMAP-Rule" id="MF_00694"/>
    </source>
</evidence>
<sequence length="301" mass="32061">MEPQDLKTVLGAGLLSFPVTPFGPDGGFNEAVYREHVGWLASFEAAALFAAGGTGEFFSLAPDEIPAIVRAAKAAAGNTPIISGCGHGTEVAISIAKAAEKAGADGILLLPHYLIDAPQAGLYNHIKRVCDSIGIGVMVYNRDNSILQADTLKRLCDVCPNLVGFKDGSGELGLVRQISATMGDRLTYLGGMPTAELFAEAYLAAGFTTYSSAVFNFVPELAVRFYKALRAGRRAECETLLKDFFYPFMAIRNRSKGYAVAAIKAGVRLRGYDAGPVRSPLVDLTSEEMDMMASLMASVDR</sequence>
<keyword id="KW-0456">Lyase</keyword>
<proteinExistence type="inferred from homology"/>
<accession>Q11GY5</accession>
<feature type="chain" id="PRO_1000045403" description="Probable 5-dehydro-4-deoxyglucarate dehydratase">
    <location>
        <begin position="1"/>
        <end position="301"/>
    </location>
</feature>
<name>KDGD_CHESB</name>
<gene>
    <name type="ordered locus">Meso_1947</name>
</gene>
<reference key="1">
    <citation type="submission" date="2006-06" db="EMBL/GenBank/DDBJ databases">
        <title>Complete sequence of chromosome of Mesorhizobium sp. BNC1.</title>
        <authorList>
            <consortium name="US DOE Joint Genome Institute"/>
            <person name="Copeland A."/>
            <person name="Lucas S."/>
            <person name="Lapidus A."/>
            <person name="Barry K."/>
            <person name="Detter J.C."/>
            <person name="Glavina del Rio T."/>
            <person name="Hammon N."/>
            <person name="Israni S."/>
            <person name="Dalin E."/>
            <person name="Tice H."/>
            <person name="Pitluck S."/>
            <person name="Chertkov O."/>
            <person name="Brettin T."/>
            <person name="Bruce D."/>
            <person name="Han C."/>
            <person name="Tapia R."/>
            <person name="Gilna P."/>
            <person name="Schmutz J."/>
            <person name="Larimer F."/>
            <person name="Land M."/>
            <person name="Hauser L."/>
            <person name="Kyrpides N."/>
            <person name="Mikhailova N."/>
            <person name="Richardson P."/>
        </authorList>
    </citation>
    <scope>NUCLEOTIDE SEQUENCE [LARGE SCALE GENOMIC DNA]</scope>
    <source>
        <strain>BNC1</strain>
    </source>
</reference>
<comment type="catalytic activity">
    <reaction evidence="1">
        <text>5-dehydro-4-deoxy-D-glucarate + H(+) = 2,5-dioxopentanoate + CO2 + H2O</text>
        <dbReference type="Rhea" id="RHEA:24608"/>
        <dbReference type="ChEBI" id="CHEBI:15377"/>
        <dbReference type="ChEBI" id="CHEBI:15378"/>
        <dbReference type="ChEBI" id="CHEBI:16526"/>
        <dbReference type="ChEBI" id="CHEBI:42819"/>
        <dbReference type="ChEBI" id="CHEBI:58136"/>
        <dbReference type="EC" id="4.2.1.41"/>
    </reaction>
</comment>
<comment type="pathway">
    <text evidence="1">Carbohydrate acid metabolism; D-glucarate degradation; 2,5-dioxopentanoate from D-glucarate: step 2/2.</text>
</comment>
<comment type="similarity">
    <text evidence="1">Belongs to the DapA family.</text>
</comment>